<feature type="chain" id="PRO_0000152681" description="Lysine--tRNA ligase">
    <location>
        <begin position="1"/>
        <end position="495"/>
    </location>
</feature>
<feature type="binding site" evidence="1">
    <location>
        <position position="406"/>
    </location>
    <ligand>
        <name>Mg(2+)</name>
        <dbReference type="ChEBI" id="CHEBI:18420"/>
        <label>1</label>
    </ligand>
</feature>
<feature type="binding site" evidence="1">
    <location>
        <position position="413"/>
    </location>
    <ligand>
        <name>Mg(2+)</name>
        <dbReference type="ChEBI" id="CHEBI:18420"/>
        <label>1</label>
    </ligand>
</feature>
<feature type="binding site" evidence="1">
    <location>
        <position position="413"/>
    </location>
    <ligand>
        <name>Mg(2+)</name>
        <dbReference type="ChEBI" id="CHEBI:18420"/>
        <label>2</label>
    </ligand>
</feature>
<accession>Q8NXZ0</accession>
<name>SYK_STAAW</name>
<protein>
    <recommendedName>
        <fullName evidence="1">Lysine--tRNA ligase</fullName>
        <ecNumber evidence="1">6.1.1.6</ecNumber>
    </recommendedName>
    <alternativeName>
        <fullName evidence="1">Lysyl-tRNA synthetase</fullName>
        <shortName evidence="1">LysRS</shortName>
    </alternativeName>
</protein>
<proteinExistence type="inferred from homology"/>
<gene>
    <name evidence="1" type="primary">lysS</name>
    <name type="ordered locus">MW0472</name>
</gene>
<organism>
    <name type="scientific">Staphylococcus aureus (strain MW2)</name>
    <dbReference type="NCBI Taxonomy" id="196620"/>
    <lineage>
        <taxon>Bacteria</taxon>
        <taxon>Bacillati</taxon>
        <taxon>Bacillota</taxon>
        <taxon>Bacilli</taxon>
        <taxon>Bacillales</taxon>
        <taxon>Staphylococcaceae</taxon>
        <taxon>Staphylococcus</taxon>
    </lineage>
</organism>
<evidence type="ECO:0000255" key="1">
    <source>
        <dbReference type="HAMAP-Rule" id="MF_00252"/>
    </source>
</evidence>
<dbReference type="EC" id="6.1.1.6" evidence="1"/>
<dbReference type="EMBL" id="BA000033">
    <property type="protein sequence ID" value="BAB94337.1"/>
    <property type="molecule type" value="Genomic_DNA"/>
</dbReference>
<dbReference type="RefSeq" id="WP_001288199.1">
    <property type="nucleotide sequence ID" value="NC_003923.1"/>
</dbReference>
<dbReference type="SMR" id="Q8NXZ0"/>
<dbReference type="KEGG" id="sam:MW0472"/>
<dbReference type="HOGENOM" id="CLU_008255_6_0_9"/>
<dbReference type="GO" id="GO:0005829">
    <property type="term" value="C:cytosol"/>
    <property type="evidence" value="ECO:0007669"/>
    <property type="project" value="TreeGrafter"/>
</dbReference>
<dbReference type="GO" id="GO:0005524">
    <property type="term" value="F:ATP binding"/>
    <property type="evidence" value="ECO:0007669"/>
    <property type="project" value="UniProtKB-UniRule"/>
</dbReference>
<dbReference type="GO" id="GO:0140096">
    <property type="term" value="F:catalytic activity, acting on a protein"/>
    <property type="evidence" value="ECO:0007669"/>
    <property type="project" value="UniProtKB-ARBA"/>
</dbReference>
<dbReference type="GO" id="GO:0004824">
    <property type="term" value="F:lysine-tRNA ligase activity"/>
    <property type="evidence" value="ECO:0007669"/>
    <property type="project" value="UniProtKB-UniRule"/>
</dbReference>
<dbReference type="GO" id="GO:0000287">
    <property type="term" value="F:magnesium ion binding"/>
    <property type="evidence" value="ECO:0007669"/>
    <property type="project" value="UniProtKB-UniRule"/>
</dbReference>
<dbReference type="GO" id="GO:0016740">
    <property type="term" value="F:transferase activity"/>
    <property type="evidence" value="ECO:0007669"/>
    <property type="project" value="UniProtKB-ARBA"/>
</dbReference>
<dbReference type="GO" id="GO:0000049">
    <property type="term" value="F:tRNA binding"/>
    <property type="evidence" value="ECO:0007669"/>
    <property type="project" value="TreeGrafter"/>
</dbReference>
<dbReference type="GO" id="GO:0006430">
    <property type="term" value="P:lysyl-tRNA aminoacylation"/>
    <property type="evidence" value="ECO:0007669"/>
    <property type="project" value="UniProtKB-UniRule"/>
</dbReference>
<dbReference type="CDD" id="cd00775">
    <property type="entry name" value="LysRS_core"/>
    <property type="match status" value="1"/>
</dbReference>
<dbReference type="CDD" id="cd04322">
    <property type="entry name" value="LysRS_N"/>
    <property type="match status" value="1"/>
</dbReference>
<dbReference type="FunFam" id="2.40.50.140:FF:000024">
    <property type="entry name" value="Lysine--tRNA ligase"/>
    <property type="match status" value="1"/>
</dbReference>
<dbReference type="FunFam" id="3.30.930.10:FF:000001">
    <property type="entry name" value="Lysine--tRNA ligase"/>
    <property type="match status" value="1"/>
</dbReference>
<dbReference type="Gene3D" id="3.30.930.10">
    <property type="entry name" value="Bira Bifunctional Protein, Domain 2"/>
    <property type="match status" value="1"/>
</dbReference>
<dbReference type="Gene3D" id="2.40.50.140">
    <property type="entry name" value="Nucleic acid-binding proteins"/>
    <property type="match status" value="1"/>
</dbReference>
<dbReference type="HAMAP" id="MF_00252">
    <property type="entry name" value="Lys_tRNA_synth_class2"/>
    <property type="match status" value="1"/>
</dbReference>
<dbReference type="InterPro" id="IPR004364">
    <property type="entry name" value="Aa-tRNA-synt_II"/>
</dbReference>
<dbReference type="InterPro" id="IPR006195">
    <property type="entry name" value="aa-tRNA-synth_II"/>
</dbReference>
<dbReference type="InterPro" id="IPR045864">
    <property type="entry name" value="aa-tRNA-synth_II/BPL/LPL"/>
</dbReference>
<dbReference type="InterPro" id="IPR002313">
    <property type="entry name" value="Lys-tRNA-ligase_II"/>
</dbReference>
<dbReference type="InterPro" id="IPR034762">
    <property type="entry name" value="Lys-tRNA-ligase_II_bac/euk"/>
</dbReference>
<dbReference type="InterPro" id="IPR044136">
    <property type="entry name" value="Lys-tRNA-ligase_II_N"/>
</dbReference>
<dbReference type="InterPro" id="IPR018149">
    <property type="entry name" value="Lys-tRNA-synth_II_C"/>
</dbReference>
<dbReference type="InterPro" id="IPR012340">
    <property type="entry name" value="NA-bd_OB-fold"/>
</dbReference>
<dbReference type="InterPro" id="IPR004365">
    <property type="entry name" value="NA-bd_OB_tRNA"/>
</dbReference>
<dbReference type="NCBIfam" id="TIGR00499">
    <property type="entry name" value="lysS_bact"/>
    <property type="match status" value="1"/>
</dbReference>
<dbReference type="NCBIfam" id="NF001756">
    <property type="entry name" value="PRK00484.1"/>
    <property type="match status" value="1"/>
</dbReference>
<dbReference type="PANTHER" id="PTHR42918:SF15">
    <property type="entry name" value="LYSINE--TRNA LIGASE, CHLOROPLASTIC_MITOCHONDRIAL"/>
    <property type="match status" value="1"/>
</dbReference>
<dbReference type="PANTHER" id="PTHR42918">
    <property type="entry name" value="LYSYL-TRNA SYNTHETASE"/>
    <property type="match status" value="1"/>
</dbReference>
<dbReference type="Pfam" id="PF00152">
    <property type="entry name" value="tRNA-synt_2"/>
    <property type="match status" value="1"/>
</dbReference>
<dbReference type="Pfam" id="PF01336">
    <property type="entry name" value="tRNA_anti-codon"/>
    <property type="match status" value="1"/>
</dbReference>
<dbReference type="PIRSF" id="PIRSF039101">
    <property type="entry name" value="LysRS2"/>
    <property type="match status" value="1"/>
</dbReference>
<dbReference type="PRINTS" id="PR00982">
    <property type="entry name" value="TRNASYNTHLYS"/>
</dbReference>
<dbReference type="SUPFAM" id="SSF55681">
    <property type="entry name" value="Class II aaRS and biotin synthetases"/>
    <property type="match status" value="1"/>
</dbReference>
<dbReference type="SUPFAM" id="SSF50249">
    <property type="entry name" value="Nucleic acid-binding proteins"/>
    <property type="match status" value="1"/>
</dbReference>
<dbReference type="PROSITE" id="PS50862">
    <property type="entry name" value="AA_TRNA_LIGASE_II"/>
    <property type="match status" value="1"/>
</dbReference>
<reference key="1">
    <citation type="journal article" date="2002" name="Lancet">
        <title>Genome and virulence determinants of high virulence community-acquired MRSA.</title>
        <authorList>
            <person name="Baba T."/>
            <person name="Takeuchi F."/>
            <person name="Kuroda M."/>
            <person name="Yuzawa H."/>
            <person name="Aoki K."/>
            <person name="Oguchi A."/>
            <person name="Nagai Y."/>
            <person name="Iwama N."/>
            <person name="Asano K."/>
            <person name="Naimi T."/>
            <person name="Kuroda H."/>
            <person name="Cui L."/>
            <person name="Yamamoto K."/>
            <person name="Hiramatsu K."/>
        </authorList>
    </citation>
    <scope>NUCLEOTIDE SEQUENCE [LARGE SCALE GENOMIC DNA]</scope>
    <source>
        <strain>MW2</strain>
    </source>
</reference>
<sequence>MSEEMNDQMLVRRQKLQELYDLGIDPFGSKFDRSGLSSDLKEEWDQYSKEELVEKEADSHVAIAGRLMTKRGKGKAGFAHVQDLAGQIQIYVRKDQVGDDEFDLWKNADLGDIVGVEGVMFKTNTGELSVKAKKFTLLTKSLRPLPDKFHGLQDIEQRYRQRYLDLITNEDSTRTFINRSKIIQEMRNYLNNKGFLEVETPMMHQIAGGAAARPFVTHHNALDATLYMRIAIELHLKRLIVGGLEKVYEIGRVFRNEGVSTRHNPEFTMIELYEAYADYHDIMDLTESMVRHIANEVLGSAKVQYNGETIDLESAWTRLHIVDAVKEATGVDFYEVKSDDEAKALAKEHGIEIKDTMKYGHILNEFFEQKVEETLIQPTFIYGHPTEISPLAKKNPEDPRFTDRFELFIVGREHANAFTELNDPIDQKGRFEAQLVEKAQGNDEAHEMDEDYIEALEYGMPPTGGLGIGIDRLVMLLTDSPSIRDVLLFPYMRQK</sequence>
<keyword id="KW-0030">Aminoacyl-tRNA synthetase</keyword>
<keyword id="KW-0067">ATP-binding</keyword>
<keyword id="KW-0963">Cytoplasm</keyword>
<keyword id="KW-0436">Ligase</keyword>
<keyword id="KW-0460">Magnesium</keyword>
<keyword id="KW-0479">Metal-binding</keyword>
<keyword id="KW-0547">Nucleotide-binding</keyword>
<keyword id="KW-0648">Protein biosynthesis</keyword>
<comment type="catalytic activity">
    <reaction evidence="1">
        <text>tRNA(Lys) + L-lysine + ATP = L-lysyl-tRNA(Lys) + AMP + diphosphate</text>
        <dbReference type="Rhea" id="RHEA:20792"/>
        <dbReference type="Rhea" id="RHEA-COMP:9696"/>
        <dbReference type="Rhea" id="RHEA-COMP:9697"/>
        <dbReference type="ChEBI" id="CHEBI:30616"/>
        <dbReference type="ChEBI" id="CHEBI:32551"/>
        <dbReference type="ChEBI" id="CHEBI:33019"/>
        <dbReference type="ChEBI" id="CHEBI:78442"/>
        <dbReference type="ChEBI" id="CHEBI:78529"/>
        <dbReference type="ChEBI" id="CHEBI:456215"/>
        <dbReference type="EC" id="6.1.1.6"/>
    </reaction>
</comment>
<comment type="cofactor">
    <cofactor evidence="1">
        <name>Mg(2+)</name>
        <dbReference type="ChEBI" id="CHEBI:18420"/>
    </cofactor>
    <text evidence="1">Binds 3 Mg(2+) ions per subunit.</text>
</comment>
<comment type="subunit">
    <text evidence="1">Homodimer.</text>
</comment>
<comment type="subcellular location">
    <subcellularLocation>
        <location evidence="1">Cytoplasm</location>
    </subcellularLocation>
</comment>
<comment type="similarity">
    <text evidence="1">Belongs to the class-II aminoacyl-tRNA synthetase family.</text>
</comment>